<name>SPZ2B_WHEAT</name>
<keyword id="KW-0903">Direct protein sequencing</keyword>
<keyword id="KW-0646">Protease inhibitor</keyword>
<keyword id="KW-1185">Reference proteome</keyword>
<keyword id="KW-0722">Serine protease inhibitor</keyword>
<comment type="function">
    <text evidence="2">Inhibits chymotrypsin, cathepsin G and trypsin in vitro.</text>
</comment>
<comment type="domain">
    <text evidence="1">The reactive center loop (RCL) extends out from the body of the protein and directs binding to the target protease. The protease cleaves the serpin at the reactive site within the RCL, establishing a covalent linkage between the carboxyl group of the serpin reactive site and the serine hydroxyl of the protease. The resulting inactive serpin-protease complex is highly stable (By similarity).</text>
</comment>
<comment type="similarity">
    <text evidence="3">Belongs to the serpin family.</text>
</comment>
<feature type="chain" id="PRO_0000334572" description="Serpin-Z2B">
    <location>
        <begin position="1"/>
        <end position="398"/>
    </location>
</feature>
<feature type="region of interest" description="RCL">
    <location>
        <begin position="343"/>
        <end position="367"/>
    </location>
</feature>
<feature type="site" description="Reactive bond">
    <location>
        <begin position="357"/>
        <end position="358"/>
    </location>
</feature>
<sequence>MATTLATDVRLSIAHQTRFAFRLASAISSNPESTVNNAAFSPVSLHVALSLITAGAGGATRNQLAATLGEGEVEGLHALAEQVVQFVLADASNIGGPRVAFANGVFVDASLQLKPSFQELAVCKYKAEAQSVDFQTKAAEVTAQVNSWVEKVTTGLIKDILPAGSIDNTTRLVLGNALYFKGAWTDQFDPRATQSDDFYLLDGSSIQTPFMYSSEEQYISSSDGLKVLKLPYKQGGDKRQFSMYILLPEALSGLWSLAEKLSAEPEFLEQHIPRQKVALRQFKLPKFKISLGIEASDLLKGLGLLLPFGAEADLSEMVDSPMAQNLYISSIFHKAFVEVNETGTEAAATTIAKVVLRQAPPPSVLDFIVDHPFLFLIREDTSGVVLFIGHVVNPLLSS</sequence>
<organism>
    <name type="scientific">Triticum aestivum</name>
    <name type="common">Wheat</name>
    <dbReference type="NCBI Taxonomy" id="4565"/>
    <lineage>
        <taxon>Eukaryota</taxon>
        <taxon>Viridiplantae</taxon>
        <taxon>Streptophyta</taxon>
        <taxon>Embryophyta</taxon>
        <taxon>Tracheophyta</taxon>
        <taxon>Spermatophyta</taxon>
        <taxon>Magnoliopsida</taxon>
        <taxon>Liliopsida</taxon>
        <taxon>Poales</taxon>
        <taxon>Poaceae</taxon>
        <taxon>BOP clade</taxon>
        <taxon>Pooideae</taxon>
        <taxon>Triticodae</taxon>
        <taxon>Triticeae</taxon>
        <taxon>Triticinae</taxon>
        <taxon>Triticum</taxon>
    </lineage>
</organism>
<accession>P93692</accession>
<evidence type="ECO:0000250" key="1"/>
<evidence type="ECO:0000269" key="2">
    <source>
    </source>
</evidence>
<evidence type="ECO:0000305" key="3"/>
<dbReference type="EMBL" id="Y11486">
    <property type="protein sequence ID" value="CAA72274.1"/>
    <property type="molecule type" value="mRNA"/>
</dbReference>
<dbReference type="PIR" id="T06597">
    <property type="entry name" value="T06597"/>
</dbReference>
<dbReference type="SMR" id="P93692"/>
<dbReference type="STRING" id="4565.P93692"/>
<dbReference type="Allergome" id="5724">
    <property type="allergen name" value="Tri a 33"/>
</dbReference>
<dbReference type="MEROPS" id="I04.032"/>
<dbReference type="PaxDb" id="4565-Traes_5DL_8115D3D0D.1"/>
<dbReference type="eggNOG" id="KOG2392">
    <property type="taxonomic scope" value="Eukaryota"/>
</dbReference>
<dbReference type="Proteomes" id="UP000019116">
    <property type="component" value="Unplaced"/>
</dbReference>
<dbReference type="ExpressionAtlas" id="P93692">
    <property type="expression patterns" value="baseline"/>
</dbReference>
<dbReference type="GO" id="GO:0005615">
    <property type="term" value="C:extracellular space"/>
    <property type="evidence" value="ECO:0000318"/>
    <property type="project" value="GO_Central"/>
</dbReference>
<dbReference type="GO" id="GO:0004867">
    <property type="term" value="F:serine-type endopeptidase inhibitor activity"/>
    <property type="evidence" value="ECO:0007669"/>
    <property type="project" value="UniProtKB-KW"/>
</dbReference>
<dbReference type="CDD" id="cd02043">
    <property type="entry name" value="serpinP_plants"/>
    <property type="match status" value="1"/>
</dbReference>
<dbReference type="FunFam" id="2.10.310.10:FF:000001">
    <property type="entry name" value="Serpin family A member 1"/>
    <property type="match status" value="1"/>
</dbReference>
<dbReference type="Gene3D" id="2.30.39.10">
    <property type="entry name" value="Alpha-1-antitrypsin, domain 1"/>
    <property type="match status" value="1"/>
</dbReference>
<dbReference type="Gene3D" id="3.30.497.10">
    <property type="entry name" value="Antithrombin, subunit I, domain 2"/>
    <property type="match status" value="1"/>
</dbReference>
<dbReference type="InterPro" id="IPR023795">
    <property type="entry name" value="Serpin_CS"/>
</dbReference>
<dbReference type="InterPro" id="IPR023796">
    <property type="entry name" value="Serpin_dom"/>
</dbReference>
<dbReference type="InterPro" id="IPR000215">
    <property type="entry name" value="Serpin_fam"/>
</dbReference>
<dbReference type="InterPro" id="IPR036186">
    <property type="entry name" value="Serpin_sf"/>
</dbReference>
<dbReference type="InterPro" id="IPR042178">
    <property type="entry name" value="Serpin_sf_1"/>
</dbReference>
<dbReference type="InterPro" id="IPR042185">
    <property type="entry name" value="Serpin_sf_2"/>
</dbReference>
<dbReference type="PANTHER" id="PTHR11461">
    <property type="entry name" value="SERINE PROTEASE INHIBITOR, SERPIN"/>
    <property type="match status" value="1"/>
</dbReference>
<dbReference type="PANTHER" id="PTHR11461:SF317">
    <property type="entry name" value="SERPIN-Z1C"/>
    <property type="match status" value="1"/>
</dbReference>
<dbReference type="Pfam" id="PF00079">
    <property type="entry name" value="Serpin"/>
    <property type="match status" value="1"/>
</dbReference>
<dbReference type="SMART" id="SM00093">
    <property type="entry name" value="SERPIN"/>
    <property type="match status" value="1"/>
</dbReference>
<dbReference type="SUPFAM" id="SSF56574">
    <property type="entry name" value="Serpins"/>
    <property type="match status" value="1"/>
</dbReference>
<dbReference type="PROSITE" id="PS00284">
    <property type="entry name" value="SERPIN"/>
    <property type="match status" value="1"/>
</dbReference>
<proteinExistence type="evidence at protein level"/>
<reference key="1">
    <citation type="journal article" date="2000" name="J. Biol. Chem.">
        <title>Inhibitory serpins from wheat grain with reactive centers resembling glutamine-rich repeats of prolamin storage proteins. Cloning and characterization of five major molecular forms.</title>
        <authorList>
            <person name="Oestergaard H."/>
            <person name="Rasmussen S.K."/>
            <person name="Roberts T.H."/>
            <person name="Hejgaard J."/>
        </authorList>
    </citation>
    <scope>NUCLEOTIDE SEQUENCE [MRNA]</scope>
    <scope>PARTIAL PROTEIN SEQUENCE</scope>
    <scope>FUNCTION</scope>
    <source>
        <strain>cv. Chinese Spring</strain>
        <tissue>Grain</tissue>
    </source>
</reference>
<protein>
    <recommendedName>
        <fullName>Serpin-Z2B</fullName>
    </recommendedName>
    <alternativeName>
        <fullName>TriaeZ2b</fullName>
    </alternativeName>
    <alternativeName>
        <fullName>WSZ2b</fullName>
    </alternativeName>
    <alternativeName>
        <fullName>WZS3</fullName>
    </alternativeName>
</protein>